<evidence type="ECO:0000255" key="1">
    <source>
        <dbReference type="HAMAP-Rule" id="MF_00794"/>
    </source>
</evidence>
<dbReference type="EMBL" id="CP000077">
    <property type="protein sequence ID" value="AAY79877.1"/>
    <property type="molecule type" value="Genomic_DNA"/>
</dbReference>
<dbReference type="RefSeq" id="WP_011277379.1">
    <property type="nucleotide sequence ID" value="NC_007181.1"/>
</dbReference>
<dbReference type="SMR" id="Q4JBF2"/>
<dbReference type="STRING" id="330779.Saci_0468"/>
<dbReference type="GeneID" id="14550994"/>
<dbReference type="KEGG" id="sai:Saci_0468"/>
<dbReference type="PATRIC" id="fig|330779.12.peg.464"/>
<dbReference type="eggNOG" id="arCOG02681">
    <property type="taxonomic scope" value="Archaea"/>
</dbReference>
<dbReference type="HOGENOM" id="CLU_170073_3_0_2"/>
<dbReference type="Proteomes" id="UP000001018">
    <property type="component" value="Chromosome"/>
</dbReference>
<dbReference type="HAMAP" id="MF_00794">
    <property type="entry name" value="UPF0330"/>
    <property type="match status" value="1"/>
</dbReference>
<dbReference type="InterPro" id="IPR003847">
    <property type="entry name" value="Put_antitoxin"/>
</dbReference>
<dbReference type="Pfam" id="PF02697">
    <property type="entry name" value="VAPB_antitox"/>
    <property type="match status" value="1"/>
</dbReference>
<gene>
    <name type="ordered locus">Saci_0468</name>
</gene>
<proteinExistence type="inferred from homology"/>
<feature type="chain" id="PRO_0000157115" description="Putative antitoxin Saci_0468">
    <location>
        <begin position="1"/>
        <end position="82"/>
    </location>
</feature>
<reference key="1">
    <citation type="journal article" date="2005" name="J. Bacteriol.">
        <title>The genome of Sulfolobus acidocaldarius, a model organism of the Crenarchaeota.</title>
        <authorList>
            <person name="Chen L."/>
            <person name="Bruegger K."/>
            <person name="Skovgaard M."/>
            <person name="Redder P."/>
            <person name="She Q."/>
            <person name="Torarinsson E."/>
            <person name="Greve B."/>
            <person name="Awayez M."/>
            <person name="Zibat A."/>
            <person name="Klenk H.-P."/>
            <person name="Garrett R.A."/>
        </authorList>
    </citation>
    <scope>NUCLEOTIDE SEQUENCE [LARGE SCALE GENOMIC DNA]</scope>
    <source>
        <strain>ATCC 33909 / DSM 639 / JCM 8929 / NBRC 15157 / NCIMB 11770</strain>
    </source>
</reference>
<accession>Q4JBF2</accession>
<comment type="function">
    <text evidence="1">Possibly the antitoxin component of a type II toxin-antitoxin (TA) system.</text>
</comment>
<comment type="similarity">
    <text evidence="1">Belongs to the UPF0330 family.</text>
</comment>
<name>Y468_SULAC</name>
<keyword id="KW-1185">Reference proteome</keyword>
<keyword id="KW-1277">Toxin-antitoxin system</keyword>
<protein>
    <recommendedName>
        <fullName evidence="1">Putative antitoxin Saci_0468</fullName>
    </recommendedName>
</protein>
<organism>
    <name type="scientific">Sulfolobus acidocaldarius (strain ATCC 33909 / DSM 639 / JCM 8929 / NBRC 15157 / NCIMB 11770)</name>
    <dbReference type="NCBI Taxonomy" id="330779"/>
    <lineage>
        <taxon>Archaea</taxon>
        <taxon>Thermoproteota</taxon>
        <taxon>Thermoprotei</taxon>
        <taxon>Sulfolobales</taxon>
        <taxon>Sulfolobaceae</taxon>
        <taxon>Sulfolobus</taxon>
    </lineage>
</organism>
<sequence>MPKVITISDDVYDKLSKLKKGRSFSETINELIEFYNKNRKGNKDVLLQMFGILNEEEATEMASETLNIRKSFRFRAVENGDT</sequence>